<comment type="function">
    <text evidence="1">Involved in the regulation of the intracellular balance of NAD and NADP, and is a key enzyme in the biosynthesis of NADP. Catalyzes specifically the phosphorylation on 2'-hydroxyl of the adenosine moiety of NAD to yield NADP.</text>
</comment>
<comment type="catalytic activity">
    <reaction evidence="1">
        <text>NAD(+) + ATP = ADP + NADP(+) + H(+)</text>
        <dbReference type="Rhea" id="RHEA:18629"/>
        <dbReference type="ChEBI" id="CHEBI:15378"/>
        <dbReference type="ChEBI" id="CHEBI:30616"/>
        <dbReference type="ChEBI" id="CHEBI:57540"/>
        <dbReference type="ChEBI" id="CHEBI:58349"/>
        <dbReference type="ChEBI" id="CHEBI:456216"/>
        <dbReference type="EC" id="2.7.1.23"/>
    </reaction>
</comment>
<comment type="cofactor">
    <cofactor evidence="1">
        <name>a divalent metal cation</name>
        <dbReference type="ChEBI" id="CHEBI:60240"/>
    </cofactor>
</comment>
<comment type="subcellular location">
    <subcellularLocation>
        <location evidence="1">Cytoplasm</location>
    </subcellularLocation>
</comment>
<comment type="similarity">
    <text evidence="1">Belongs to the NAD kinase family.</text>
</comment>
<name>NADK2_BACLD</name>
<reference key="1">
    <citation type="journal article" date="2004" name="J. Mol. Microbiol. Biotechnol.">
        <title>The complete genome sequence of Bacillus licheniformis DSM13, an organism with great industrial potential.</title>
        <authorList>
            <person name="Veith B."/>
            <person name="Herzberg C."/>
            <person name="Steckel S."/>
            <person name="Feesche J."/>
            <person name="Maurer K.H."/>
            <person name="Ehrenreich P."/>
            <person name="Baeumer S."/>
            <person name="Henne A."/>
            <person name="Liesegang H."/>
            <person name="Merkl R."/>
            <person name="Ehrenreich A."/>
            <person name="Gottschalk G."/>
        </authorList>
    </citation>
    <scope>NUCLEOTIDE SEQUENCE [LARGE SCALE GENOMIC DNA]</scope>
    <source>
        <strain>ATCC 14580 / DSM 13 / JCM 2505 / CCUG 7422 / NBRC 12200 / NCIMB 9375 / NCTC 10341 / NRRL NRS-1264 / Gibson 46</strain>
    </source>
</reference>
<reference key="2">
    <citation type="journal article" date="2004" name="Genome Biol.">
        <title>Complete genome sequence of the industrial bacterium Bacillus licheniformis and comparisons with closely related Bacillus species.</title>
        <authorList>
            <person name="Rey M.W."/>
            <person name="Ramaiya P."/>
            <person name="Nelson B.A."/>
            <person name="Brody-Karpin S.D."/>
            <person name="Zaretsky E.J."/>
            <person name="Tang M."/>
            <person name="Lopez de Leon A."/>
            <person name="Xiang H."/>
            <person name="Gusti V."/>
            <person name="Clausen I.G."/>
            <person name="Olsen P.B."/>
            <person name="Rasmussen M.D."/>
            <person name="Andersen J.T."/>
            <person name="Joergensen P.L."/>
            <person name="Larsen T.S."/>
            <person name="Sorokin A."/>
            <person name="Bolotin A."/>
            <person name="Lapidus A."/>
            <person name="Galleron N."/>
            <person name="Ehrlich S.D."/>
            <person name="Berka R.M."/>
        </authorList>
    </citation>
    <scope>NUCLEOTIDE SEQUENCE [LARGE SCALE GENOMIC DNA]</scope>
    <source>
        <strain>ATCC 14580 / DSM 13 / JCM 2505 / CCUG 7422 / NBRC 12200 / NCIMB 9375 / NCTC 10341 / NRRL NRS-1264 / Gibson 46</strain>
    </source>
</reference>
<organism>
    <name type="scientific">Bacillus licheniformis (strain ATCC 14580 / DSM 13 / JCM 2505 / CCUG 7422 / NBRC 12200 / NCIMB 9375 / NCTC 10341 / NRRL NRS-1264 / Gibson 46)</name>
    <dbReference type="NCBI Taxonomy" id="279010"/>
    <lineage>
        <taxon>Bacteria</taxon>
        <taxon>Bacillati</taxon>
        <taxon>Bacillota</taxon>
        <taxon>Bacilli</taxon>
        <taxon>Bacillales</taxon>
        <taxon>Bacillaceae</taxon>
        <taxon>Bacillus</taxon>
    </lineage>
</organism>
<keyword id="KW-0067">ATP-binding</keyword>
<keyword id="KW-0963">Cytoplasm</keyword>
<keyword id="KW-0418">Kinase</keyword>
<keyword id="KW-0520">NAD</keyword>
<keyword id="KW-0521">NADP</keyword>
<keyword id="KW-0547">Nucleotide-binding</keyword>
<keyword id="KW-1185">Reference proteome</keyword>
<keyword id="KW-0808">Transferase</keyword>
<sequence>MTDRRNIYFFYKKSEETDEQCKKLKQLAEEHGFRVVHHHNEANIIASIGGDGTFLQAVRKTNFRDDCLYVGVAKKGKAHLYADFNIYDTDKMIEATNSEQIEVRKYPLIDVTVDGTSFQCLNEVSIRSSIIKTFVMDVYIDDLHFETFRGDGMIVSTPTGSTAYNKSVDGAIVDPLIPCIQVTELASLNNNTYRTLGSPFILSADRKLTLKIVQDGNDYPIIGLDNEAFSTMNVKEVEVSLSGKMIKTIKLKDNSFWEKVRRTFL</sequence>
<dbReference type="EC" id="2.7.1.23" evidence="1"/>
<dbReference type="EMBL" id="AE017333">
    <property type="protein sequence ID" value="AAU41956.1"/>
    <property type="molecule type" value="Genomic_DNA"/>
</dbReference>
<dbReference type="EMBL" id="CP000002">
    <property type="protein sequence ID" value="AAU24598.1"/>
    <property type="molecule type" value="Genomic_DNA"/>
</dbReference>
<dbReference type="RefSeq" id="WP_009329373.1">
    <property type="nucleotide sequence ID" value="NC_006322.1"/>
</dbReference>
<dbReference type="SMR" id="Q65G58"/>
<dbReference type="STRING" id="279010.BL00367"/>
<dbReference type="KEGG" id="bld:BLi03093"/>
<dbReference type="KEGG" id="bli:BL00367"/>
<dbReference type="PATRIC" id="fig|279010.13.peg.3159"/>
<dbReference type="eggNOG" id="COG0061">
    <property type="taxonomic scope" value="Bacteria"/>
</dbReference>
<dbReference type="HOGENOM" id="CLU_008831_0_3_9"/>
<dbReference type="Proteomes" id="UP000000606">
    <property type="component" value="Chromosome"/>
</dbReference>
<dbReference type="GO" id="GO:0005737">
    <property type="term" value="C:cytoplasm"/>
    <property type="evidence" value="ECO:0007669"/>
    <property type="project" value="UniProtKB-SubCell"/>
</dbReference>
<dbReference type="GO" id="GO:0005524">
    <property type="term" value="F:ATP binding"/>
    <property type="evidence" value="ECO:0007669"/>
    <property type="project" value="UniProtKB-KW"/>
</dbReference>
<dbReference type="GO" id="GO:0046872">
    <property type="term" value="F:metal ion binding"/>
    <property type="evidence" value="ECO:0007669"/>
    <property type="project" value="UniProtKB-UniRule"/>
</dbReference>
<dbReference type="GO" id="GO:0051287">
    <property type="term" value="F:NAD binding"/>
    <property type="evidence" value="ECO:0007669"/>
    <property type="project" value="UniProtKB-ARBA"/>
</dbReference>
<dbReference type="GO" id="GO:0003951">
    <property type="term" value="F:NAD+ kinase activity"/>
    <property type="evidence" value="ECO:0007669"/>
    <property type="project" value="UniProtKB-UniRule"/>
</dbReference>
<dbReference type="GO" id="GO:0019674">
    <property type="term" value="P:NAD metabolic process"/>
    <property type="evidence" value="ECO:0007669"/>
    <property type="project" value="InterPro"/>
</dbReference>
<dbReference type="GO" id="GO:0006741">
    <property type="term" value="P:NADP biosynthetic process"/>
    <property type="evidence" value="ECO:0007669"/>
    <property type="project" value="UniProtKB-UniRule"/>
</dbReference>
<dbReference type="Gene3D" id="3.40.50.10330">
    <property type="entry name" value="Probable inorganic polyphosphate/atp-NAD kinase, domain 1"/>
    <property type="match status" value="1"/>
</dbReference>
<dbReference type="Gene3D" id="2.60.200.30">
    <property type="entry name" value="Probable inorganic polyphosphate/atp-NAD kinase, domain 2"/>
    <property type="match status" value="1"/>
</dbReference>
<dbReference type="HAMAP" id="MF_00361">
    <property type="entry name" value="NAD_kinase"/>
    <property type="match status" value="1"/>
</dbReference>
<dbReference type="InterPro" id="IPR017438">
    <property type="entry name" value="ATP-NAD_kinase_N"/>
</dbReference>
<dbReference type="InterPro" id="IPR017437">
    <property type="entry name" value="ATP-NAD_kinase_PpnK-typ_C"/>
</dbReference>
<dbReference type="InterPro" id="IPR016064">
    <property type="entry name" value="NAD/diacylglycerol_kinase_sf"/>
</dbReference>
<dbReference type="InterPro" id="IPR002504">
    <property type="entry name" value="NADK"/>
</dbReference>
<dbReference type="NCBIfam" id="NF002902">
    <property type="entry name" value="PRK03501.1"/>
    <property type="match status" value="1"/>
</dbReference>
<dbReference type="NCBIfam" id="NF003424">
    <property type="entry name" value="PRK04885.1"/>
    <property type="match status" value="1"/>
</dbReference>
<dbReference type="PANTHER" id="PTHR20275">
    <property type="entry name" value="NAD KINASE"/>
    <property type="match status" value="1"/>
</dbReference>
<dbReference type="PANTHER" id="PTHR20275:SF9">
    <property type="entry name" value="NAD KINASE 2"/>
    <property type="match status" value="1"/>
</dbReference>
<dbReference type="Pfam" id="PF20143">
    <property type="entry name" value="NAD_kinase_C"/>
    <property type="match status" value="1"/>
</dbReference>
<dbReference type="SUPFAM" id="SSF111331">
    <property type="entry name" value="NAD kinase/diacylglycerol kinase-like"/>
    <property type="match status" value="1"/>
</dbReference>
<evidence type="ECO:0000255" key="1">
    <source>
        <dbReference type="HAMAP-Rule" id="MF_00361"/>
    </source>
</evidence>
<gene>
    <name evidence="1" type="primary">nadK2</name>
    <name type="ordered locus">BLi03093</name>
    <name type="ordered locus">BL00367</name>
</gene>
<protein>
    <recommendedName>
        <fullName evidence="1">NAD kinase 2</fullName>
        <ecNumber evidence="1">2.7.1.23</ecNumber>
    </recommendedName>
    <alternativeName>
        <fullName evidence="1">ATP-dependent NAD kinase 2</fullName>
    </alternativeName>
</protein>
<proteinExistence type="inferred from homology"/>
<accession>Q65G58</accession>
<accession>Q62RL2</accession>
<feature type="chain" id="PRO_0000229605" description="NAD kinase 2">
    <location>
        <begin position="1"/>
        <end position="265"/>
    </location>
</feature>
<feature type="active site" description="Proton acceptor" evidence="1">
    <location>
        <position position="51"/>
    </location>
</feature>
<feature type="binding site" evidence="1">
    <location>
        <begin position="51"/>
        <end position="52"/>
    </location>
    <ligand>
        <name>NAD(+)</name>
        <dbReference type="ChEBI" id="CHEBI:57540"/>
    </ligand>
</feature>
<feature type="binding site" evidence="1">
    <location>
        <begin position="122"/>
        <end position="123"/>
    </location>
    <ligand>
        <name>NAD(+)</name>
        <dbReference type="ChEBI" id="CHEBI:57540"/>
    </ligand>
</feature>
<feature type="binding site" evidence="1">
    <location>
        <position position="149"/>
    </location>
    <ligand>
        <name>NAD(+)</name>
        <dbReference type="ChEBI" id="CHEBI:57540"/>
    </ligand>
</feature>
<feature type="binding site" evidence="1">
    <location>
        <position position="151"/>
    </location>
    <ligand>
        <name>NAD(+)</name>
        <dbReference type="ChEBI" id="CHEBI:57540"/>
    </ligand>
</feature>
<feature type="binding site" evidence="1">
    <location>
        <begin position="162"/>
        <end position="167"/>
    </location>
    <ligand>
        <name>NAD(+)</name>
        <dbReference type="ChEBI" id="CHEBI:57540"/>
    </ligand>
</feature>
<feature type="binding site" evidence="1">
    <location>
        <position position="186"/>
    </location>
    <ligand>
        <name>NAD(+)</name>
        <dbReference type="ChEBI" id="CHEBI:57540"/>
    </ligand>
</feature>